<protein>
    <recommendedName>
        <fullName>Centrosomal protein of 85 kDa</fullName>
        <shortName>Cep85</shortName>
    </recommendedName>
    <alternativeName>
        <fullName>Coiled-coil domain-containing protein 21</fullName>
    </alternativeName>
</protein>
<comment type="function">
    <text evidence="4 5 6">Acts as a regulator of centriole duplication through a direct interaction with STIL, a key factor involved in the early steps of centriole formation. The CEP85-STIL protein complex acts as a modulator of PLK4-driven cytoskeletal rearrangements and directional cell motility (PubMed:29712910, PubMed:32107292). Acts as a negative regulator of NEK2 to maintain the centrosome integrity in interphase. Suppresses centrosome disjunction by inhibiting NEK2 kinase activity (PubMed:26220856).</text>
</comment>
<comment type="subunit">
    <text evidence="5 6">Homodimer (PubMed:29712910). Interacts with STIL (via N-terminus); this interaction is essential for robust PLK4 activation and efficient centriole assembly and for PLK4-dependent cell migration (PubMed:29712910). Interacts with PLK4; required for CEP85 to be able to drive centriole duplication and cell migration (PubMed:32107292).</text>
</comment>
<comment type="interaction">
    <interactant intactId="EBI-2808308">
        <id>Q6P2H3</id>
    </interactant>
    <interactant intactId="EBI-710997">
        <id>P54274</id>
        <label>TERF1</label>
    </interactant>
    <organismsDiffer>false</organismsDiffer>
    <experiments>2</experiments>
</comment>
<comment type="interaction">
    <interactant intactId="EBI-2808308">
        <id>Q6P2H3</id>
    </interactant>
    <interactant intactId="EBI-6863741">
        <id>PRO_0000037548</id>
        <dbReference type="UniProtKB" id="Q9WMX2"/>
    </interactant>
    <organismsDiffer>true</organismsDiffer>
    <experiments>2</experiments>
</comment>
<comment type="interaction">
    <interactant intactId="EBI-12368239">
        <id>Q6P2H3-3</id>
    </interactant>
    <interactant intactId="EBI-739832">
        <id>Q8TBB1</id>
        <label>LNX1</label>
    </interactant>
    <organismsDiffer>false</organismsDiffer>
    <experiments>3</experiments>
</comment>
<comment type="interaction">
    <interactant intactId="EBI-12368239">
        <id>Q6P2H3-3</id>
    </interactant>
    <interactant intactId="EBI-741158">
        <id>Q96HA8</id>
        <label>NTAQ1</label>
    </interactant>
    <organismsDiffer>false</organismsDiffer>
    <experiments>3</experiments>
</comment>
<comment type="interaction">
    <interactant intactId="EBI-12368239">
        <id>Q6P2H3-3</id>
    </interactant>
    <interactant intactId="EBI-373337">
        <id>O76064</id>
        <label>RNF8</label>
    </interactant>
    <organismsDiffer>false</organismsDiffer>
    <experiments>3</experiments>
</comment>
<comment type="interaction">
    <interactant intactId="EBI-12368239">
        <id>Q6P2H3-3</id>
    </interactant>
    <interactant intactId="EBI-727004">
        <id>O00560</id>
        <label>SDCBP</label>
    </interactant>
    <organismsDiffer>false</organismsDiffer>
    <experiments>3</experiments>
</comment>
<comment type="interaction">
    <interactant intactId="EBI-12368239">
        <id>Q6P2H3-3</id>
    </interactant>
    <interactant intactId="EBI-3650647">
        <id>Q9BUZ4</id>
        <label>TRAF4</label>
    </interactant>
    <organismsDiffer>false</organismsDiffer>
    <experiments>3</experiments>
</comment>
<comment type="subcellular location">
    <subcellularLocation>
        <location evidence="3 4">Cytoplasm</location>
        <location evidence="3 4">Cytoskeleton</location>
        <location evidence="3 4">Microtubule organizing center</location>
        <location evidence="3 4">Centrosome</location>
    </subcellularLocation>
    <subcellularLocation>
        <location evidence="3 4">Cytoplasm</location>
        <location evidence="3 4">Cytoskeleton</location>
        <location evidence="3 4">Spindle pole</location>
    </subcellularLocation>
    <subcellularLocation>
        <location evidence="3">Nucleus</location>
        <location evidence="3">Nucleolus</location>
    </subcellularLocation>
    <subcellularLocation>
        <location evidence="5 6">Cytoplasm</location>
        <location evidence="5 6">Cytoskeleton</location>
        <location evidence="5 6">Microtubule organizing center</location>
        <location evidence="5 6">Centrosome</location>
        <location evidence="5 6">Centriole</location>
    </subcellularLocation>
    <subcellularLocation>
        <location evidence="6">Cytoplasm</location>
        <location evidence="6">Cell cortex</location>
    </subcellularLocation>
    <text evidence="3 4 6">Localizes to centrosomes and nucleolus in interphase. Upon entry into mitosis, relocates from nucleolus and accumulates at spindle poles (PubMed:21399614). Associated with the pericentriolar material. Localizes to centrosomes at a low level in G1 phase and a slightly increased level in S phase, with gradually elevated levels during G2 phase. The levels at centrosomes further increase at G2/M, reaching a peak at spindle poles at early mitotic stages and remain high until the end of anaphase (PubMed:26220856). Localizes at the leading edge (PubMed:32107292).</text>
</comment>
<comment type="alternative products">
    <event type="alternative splicing"/>
    <isoform>
        <id>Q6P2H3-1</id>
        <name>1</name>
        <sequence type="displayed"/>
    </isoform>
    <isoform>
        <id>Q6P2H3-2</id>
        <name>2</name>
        <sequence type="described" ref="VSP_018147"/>
    </isoform>
    <isoform>
        <id>Q6P2H3-3</id>
        <name>3</name>
        <sequence type="described" ref="VSP_026435"/>
    </isoform>
    <isoform>
        <id>Q6P2H3-4</id>
        <name>4</name>
        <sequence type="described" ref="VSP_055609"/>
    </isoform>
</comment>
<comment type="similarity">
    <text evidence="10">Belongs to the CEP85 family.</text>
</comment>
<comment type="sequence caution" evidence="10">
    <conflict type="erroneous initiation">
        <sequence resource="EMBL-CDS" id="BAB15203"/>
    </conflict>
    <text>Truncated N-terminus.</text>
</comment>
<proteinExistence type="evidence at protein level"/>
<sequence>MAMQEKYPTEGISHVTSPSSDVIQKGSSLGTEWQTPVISEPFRSRFSRCSSVADSGDTAIGTSCSDIAEDFCSSSGSPPFQPIKSHVTIPTAHVMPSTLGTSPAKPNSTPVGPSSSKLPLSGLAESVGMTRNGDLGAMKHSPGLSRDLMYFSGATGENGIEQSWFPAVGHERQEEARKFDIPSMESTLNQSAMMETLYSDPHHRVRFHNPRTSTSKELYRVLPEAKKAPGSGAVFERNGPHSNSSGVLPLGLQPAPGLSKPLPSQVWQPSPDTWHPREQSCELSTCRQQLELIRLQMEQMQLQNGAICHHPAAFGPSLPILEPAQWISILNSNEHLLKEKELLIDKQRKHISQLEQKVRESELQVHSALLGRPAPFGDVCLLRLQELQRENTFLRAQFAQKTEALSREKIDLEKKLSASEVEVQLIRESLKVALQKHSEEVKKQEERVKGRDKHINNLKKKCQKESEQNREKQQRIETLERYLADLPTLEDHQKQSQQLKDSELKSTELQEKVTELESLLEETQAICREKEIQLESLRQREAEFSSAGHSLQDKQSVEETSGEGPEVEMESWQKRYDSLQKIVEKQQQKMDQLRSQVQSLEQEVAQEEGTSQALREEAQRRDSALQQLRTAVKELSVQNQDLIEKNLTLQEHLRQAQPGSPPSPDTAQLALELHQELASCLQDLQAVCSIVTQRAQGHDPNLSLLLGIHSAQHPETQLDLQKPDVIKRKLEEVQQLRRDIEDLRTTMSDRYAQDMGENCVTQ</sequence>
<feature type="chain" id="PRO_0000233660" description="Centrosomal protein of 85 kDa">
    <location>
        <begin position="1"/>
        <end position="762"/>
    </location>
</feature>
<feature type="region of interest" description="Disordered" evidence="2">
    <location>
        <begin position="1"/>
        <end position="26"/>
    </location>
</feature>
<feature type="region of interest" description="Disordered" evidence="2">
    <location>
        <begin position="94"/>
        <end position="119"/>
    </location>
</feature>
<feature type="region of interest" description="Mediates interaction with NEK2 and is required for its function in the suppression of centrosome disjunction" evidence="4">
    <location>
        <begin position="257"/>
        <end position="433"/>
    </location>
</feature>
<feature type="region of interest" description="Required for centrosome localization and for its function in the suppression of centrosome disjunction" evidence="4">
    <location>
        <begin position="434"/>
        <end position="476"/>
    </location>
</feature>
<feature type="region of interest" description="Disordered" evidence="2">
    <location>
        <begin position="443"/>
        <end position="474"/>
    </location>
</feature>
<feature type="region of interest" description="Disordered" evidence="2">
    <location>
        <begin position="541"/>
        <end position="570"/>
    </location>
</feature>
<feature type="coiled-coil region" evidence="1">
    <location>
        <begin position="334"/>
        <end position="657"/>
    </location>
</feature>
<feature type="coiled-coil region" evidence="1">
    <location>
        <begin position="723"/>
        <end position="750"/>
    </location>
</feature>
<feature type="compositionally biased region" description="Polar residues" evidence="2">
    <location>
        <begin position="14"/>
        <end position="26"/>
    </location>
</feature>
<feature type="compositionally biased region" description="Polar residues" evidence="2">
    <location>
        <begin position="98"/>
        <end position="111"/>
    </location>
</feature>
<feature type="compositionally biased region" description="Basic and acidic residues" evidence="2">
    <location>
        <begin position="443"/>
        <end position="455"/>
    </location>
</feature>
<feature type="compositionally biased region" description="Basic and acidic residues" evidence="2">
    <location>
        <begin position="463"/>
        <end position="474"/>
    </location>
</feature>
<feature type="modified residue" description="Phosphoserine" evidence="14">
    <location>
        <position position="17"/>
    </location>
</feature>
<feature type="modified residue" description="Phosphoserine" evidence="16">
    <location>
        <position position="126"/>
    </location>
</feature>
<feature type="modified residue" description="Phosphoserine" evidence="16">
    <location>
        <position position="141"/>
    </location>
</feature>
<feature type="modified residue" description="Phosphoserine" evidence="15">
    <location>
        <position position="623"/>
    </location>
</feature>
<feature type="splice variant" id="VSP_026435" description="In isoform 3." evidence="8">
    <location>
        <begin position="1"/>
        <end position="568"/>
    </location>
</feature>
<feature type="splice variant" id="VSP_055609" description="In isoform 4." evidence="7">
    <original>SSDVIQKGSSLGTEWQTPVISEPFRSRFSRCSSVADSGDTAIGTSCSDIAED</original>
    <variation>N</variation>
    <location>
        <begin position="19"/>
        <end position="70"/>
    </location>
</feature>
<feature type="splice variant" id="VSP_018147" description="In isoform 2." evidence="7 9">
    <original>SA</original>
    <variation>S</variation>
    <location>
        <begin position="710"/>
        <end position="711"/>
    </location>
</feature>
<feature type="sequence variant" id="VAR_053938" description="In dbSNP:rs35831900.">
    <original>R</original>
    <variation>H</variation>
    <location>
        <position position="48"/>
    </location>
</feature>
<feature type="sequence variant" id="VAR_053939" description="In dbSNP:rs3795686.">
    <original>S</original>
    <variation>N</variation>
    <location>
        <position position="213"/>
    </location>
</feature>
<feature type="sequence variant" id="VAR_033665" description="In dbSNP:rs7550997.">
    <original>A</original>
    <variation>T</variation>
    <location>
        <position position="542"/>
    </location>
</feature>
<feature type="sequence variant" id="VAR_053940" description="In dbSNP:rs36013141.">
    <original>Q</original>
    <variation>H</variation>
    <location>
        <position position="668"/>
    </location>
</feature>
<feature type="mutagenesis site" description="Strongly reduced interaction with STIL. Strongly reduced interaction with STIL; when associated with A-644. Does not affect interaction wit PLKA; when associated with A-644." evidence="5 6">
    <original>Q</original>
    <variation>A</variation>
    <location>
        <position position="640"/>
    </location>
</feature>
<feature type="mutagenesis site" description="Strongly reduced interaction with STIL. Strongly reduced interaction with STIL; when associated with A-640. Does not affect interaction wit PLKA; when associated with A-644." evidence="5 6">
    <original>E</original>
    <variation>A</variation>
    <location>
        <position position="644"/>
    </location>
</feature>
<feature type="sequence conflict" description="In Ref. 1; BAB14794." evidence="10" ref="1">
    <original>LSK</original>
    <variation>HSSQ</variation>
    <location>
        <begin position="258"/>
        <end position="260"/>
    </location>
</feature>
<feature type="sequence conflict" description="In Ref. 1; BAG61323." evidence="10" ref="1">
    <original>E</original>
    <variation>G</variation>
    <location>
        <position position="517"/>
    </location>
</feature>
<feature type="sequence conflict" description="In Ref. 1; BAB15203." evidence="10" ref="1">
    <original>S</original>
    <variation>G</variation>
    <location>
        <position position="561"/>
    </location>
</feature>
<feature type="helix" evidence="17">
    <location>
        <begin position="572"/>
        <end position="652"/>
    </location>
</feature>
<dbReference type="EMBL" id="AK024038">
    <property type="protein sequence ID" value="BAB14794.1"/>
    <property type="molecule type" value="mRNA"/>
</dbReference>
<dbReference type="EMBL" id="AK025653">
    <property type="protein sequence ID" value="BAB15203.1"/>
    <property type="status" value="ALT_INIT"/>
    <property type="molecule type" value="mRNA"/>
</dbReference>
<dbReference type="EMBL" id="AK299312">
    <property type="protein sequence ID" value="BAG61323.1"/>
    <property type="molecule type" value="mRNA"/>
</dbReference>
<dbReference type="EMBL" id="AL355877">
    <property type="status" value="NOT_ANNOTATED_CDS"/>
    <property type="molecule type" value="Genomic_DNA"/>
</dbReference>
<dbReference type="EMBL" id="AL451139">
    <property type="status" value="NOT_ANNOTATED_CDS"/>
    <property type="molecule type" value="Genomic_DNA"/>
</dbReference>
<dbReference type="EMBL" id="CH471059">
    <property type="protein sequence ID" value="EAX07834.1"/>
    <property type="molecule type" value="Genomic_DNA"/>
</dbReference>
<dbReference type="EMBL" id="CH471059">
    <property type="protein sequence ID" value="EAX07835.1"/>
    <property type="molecule type" value="Genomic_DNA"/>
</dbReference>
<dbReference type="EMBL" id="BC019902">
    <property type="protein sequence ID" value="AAH19902.1"/>
    <property type="molecule type" value="mRNA"/>
</dbReference>
<dbReference type="EMBL" id="BC064528">
    <property type="protein sequence ID" value="AAH64528.1"/>
    <property type="molecule type" value="mRNA"/>
</dbReference>
<dbReference type="EMBL" id="AL133609">
    <property type="protein sequence ID" value="CAB63740.1"/>
    <property type="molecule type" value="mRNA"/>
</dbReference>
<dbReference type="CCDS" id="CCDS277.1">
    <molecule id="Q6P2H3-1"/>
</dbReference>
<dbReference type="CCDS" id="CCDS60038.1">
    <molecule id="Q6P2H3-4"/>
</dbReference>
<dbReference type="CCDS" id="CCDS81285.1">
    <molecule id="Q6P2H3-2"/>
</dbReference>
<dbReference type="PIR" id="T43448">
    <property type="entry name" value="T43448"/>
</dbReference>
<dbReference type="RefSeq" id="NP_001268446.1">
    <molecule id="Q6P2H3-4"/>
    <property type="nucleotide sequence ID" value="NM_001281517.3"/>
</dbReference>
<dbReference type="RefSeq" id="NP_001268447.1">
    <molecule id="Q6P2H3-3"/>
    <property type="nucleotide sequence ID" value="NM_001281518.3"/>
</dbReference>
<dbReference type="RefSeq" id="NP_001306873.1">
    <molecule id="Q6P2H3-2"/>
    <property type="nucleotide sequence ID" value="NM_001319944.2"/>
</dbReference>
<dbReference type="RefSeq" id="NP_073615.2">
    <molecule id="Q6P2H3-1"/>
    <property type="nucleotide sequence ID" value="NM_022778.4"/>
</dbReference>
<dbReference type="RefSeq" id="XP_024304968.1">
    <molecule id="Q6P2H3-1"/>
    <property type="nucleotide sequence ID" value="XM_024449200.2"/>
</dbReference>
<dbReference type="RefSeq" id="XP_047284007.1">
    <molecule id="Q6P2H3-2"/>
    <property type="nucleotide sequence ID" value="XM_047428051.1"/>
</dbReference>
<dbReference type="RefSeq" id="XP_047284008.1">
    <molecule id="Q6P2H3-3"/>
    <property type="nucleotide sequence ID" value="XM_047428052.1"/>
</dbReference>
<dbReference type="RefSeq" id="XP_054194278.1">
    <molecule id="Q6P2H3-1"/>
    <property type="nucleotide sequence ID" value="XM_054338303.1"/>
</dbReference>
<dbReference type="RefSeq" id="XP_054194279.1">
    <molecule id="Q6P2H3-2"/>
    <property type="nucleotide sequence ID" value="XM_054338304.1"/>
</dbReference>
<dbReference type="RefSeq" id="XP_054194281.1">
    <molecule id="Q6P2H3-3"/>
    <property type="nucleotide sequence ID" value="XM_054338306.1"/>
</dbReference>
<dbReference type="PDB" id="5OI7">
    <property type="method" value="X-ray"/>
    <property type="resolution" value="1.67 A"/>
    <property type="chains" value="A/B=570-656"/>
</dbReference>
<dbReference type="PDB" id="5OID">
    <property type="method" value="X-ray"/>
    <property type="resolution" value="4.60 A"/>
    <property type="chains" value="B=570-656"/>
</dbReference>
<dbReference type="PDBsum" id="5OI7"/>
<dbReference type="PDBsum" id="5OID"/>
<dbReference type="SMR" id="Q6P2H3"/>
<dbReference type="BioGRID" id="122301">
    <property type="interactions" value="181"/>
</dbReference>
<dbReference type="FunCoup" id="Q6P2H3">
    <property type="interactions" value="1443"/>
</dbReference>
<dbReference type="IntAct" id="Q6P2H3">
    <property type="interactions" value="87"/>
</dbReference>
<dbReference type="MINT" id="Q6P2H3"/>
<dbReference type="STRING" id="9606.ENSP00000252992"/>
<dbReference type="GlyGen" id="Q6P2H3">
    <property type="glycosylation" value="3 sites, 1 N-linked glycan (1 site), 1 O-linked glycan (2 sites)"/>
</dbReference>
<dbReference type="iPTMnet" id="Q6P2H3"/>
<dbReference type="MetOSite" id="Q6P2H3"/>
<dbReference type="PhosphoSitePlus" id="Q6P2H3"/>
<dbReference type="BioMuta" id="CEP85"/>
<dbReference type="DMDM" id="74737212"/>
<dbReference type="jPOST" id="Q6P2H3"/>
<dbReference type="MassIVE" id="Q6P2H3"/>
<dbReference type="PaxDb" id="9606-ENSP00000252992"/>
<dbReference type="PeptideAtlas" id="Q6P2H3"/>
<dbReference type="ProteomicsDB" id="29962"/>
<dbReference type="ProteomicsDB" id="66901">
    <molecule id="Q6P2H3-1"/>
</dbReference>
<dbReference type="ProteomicsDB" id="66902">
    <molecule id="Q6P2H3-2"/>
</dbReference>
<dbReference type="ProteomicsDB" id="66903">
    <molecule id="Q6P2H3-3"/>
</dbReference>
<dbReference type="Pumba" id="Q6P2H3"/>
<dbReference type="Antibodypedia" id="16049">
    <property type="antibodies" value="70 antibodies from 16 providers"/>
</dbReference>
<dbReference type="DNASU" id="64793"/>
<dbReference type="Ensembl" id="ENST00000252992.8">
    <molecule id="Q6P2H3-1"/>
    <property type="protein sequence ID" value="ENSP00000252992.4"/>
    <property type="gene ID" value="ENSG00000130695.16"/>
</dbReference>
<dbReference type="Ensembl" id="ENST00000451429.8">
    <molecule id="Q6P2H3-2"/>
    <property type="protein sequence ID" value="ENSP00000417002.3"/>
    <property type="gene ID" value="ENSG00000130695.16"/>
</dbReference>
<dbReference type="Ensembl" id="ENST00000640292.2">
    <molecule id="Q6P2H3-4"/>
    <property type="protein sequence ID" value="ENSP00000492362.2"/>
    <property type="gene ID" value="ENSG00000130695.16"/>
</dbReference>
<dbReference type="GeneID" id="64793"/>
<dbReference type="KEGG" id="hsa:64793"/>
<dbReference type="MANE-Select" id="ENST00000451429.8">
    <molecule id="Q6P2H3-2"/>
    <property type="protein sequence ID" value="ENSP00000417002.3"/>
    <property type="RefSeq nucleotide sequence ID" value="NM_001319944.2"/>
    <property type="RefSeq protein sequence ID" value="NP_001306873.1"/>
</dbReference>
<dbReference type="UCSC" id="uc001bls.3">
    <molecule id="Q6P2H3-1"/>
    <property type="organism name" value="human"/>
</dbReference>
<dbReference type="AGR" id="HGNC:25309"/>
<dbReference type="CTD" id="64793"/>
<dbReference type="DisGeNET" id="64793"/>
<dbReference type="GeneCards" id="CEP85"/>
<dbReference type="HGNC" id="HGNC:25309">
    <property type="gene designation" value="CEP85"/>
</dbReference>
<dbReference type="HPA" id="ENSG00000130695">
    <property type="expression patterns" value="Tissue enhanced (skeletal muscle, tongue)"/>
</dbReference>
<dbReference type="MIM" id="618898">
    <property type="type" value="gene"/>
</dbReference>
<dbReference type="neXtProt" id="NX_Q6P2H3"/>
<dbReference type="OpenTargets" id="ENSG00000130695"/>
<dbReference type="PharmGKB" id="PA142672180"/>
<dbReference type="VEuPathDB" id="HostDB:ENSG00000130695"/>
<dbReference type="eggNOG" id="ENOG502QR5U">
    <property type="taxonomic scope" value="Eukaryota"/>
</dbReference>
<dbReference type="GeneTree" id="ENSGT00620000087993"/>
<dbReference type="HOGENOM" id="CLU_020103_0_0_1"/>
<dbReference type="InParanoid" id="Q6P2H3"/>
<dbReference type="OMA" id="HFSETDW"/>
<dbReference type="OrthoDB" id="5972981at2759"/>
<dbReference type="PAN-GO" id="Q6P2H3">
    <property type="GO annotations" value="1 GO annotation based on evolutionary models"/>
</dbReference>
<dbReference type="PhylomeDB" id="Q6P2H3"/>
<dbReference type="TreeFam" id="TF331041"/>
<dbReference type="PathwayCommons" id="Q6P2H3"/>
<dbReference type="SignaLink" id="Q6P2H3"/>
<dbReference type="BioGRID-ORCS" id="64793">
    <property type="hits" value="287 hits in 1161 CRISPR screens"/>
</dbReference>
<dbReference type="CD-CODE" id="232F8A39">
    <property type="entry name" value="P-body"/>
</dbReference>
<dbReference type="CD-CODE" id="8C2F96ED">
    <property type="entry name" value="Centrosome"/>
</dbReference>
<dbReference type="CD-CODE" id="DEE660B4">
    <property type="entry name" value="Stress granule"/>
</dbReference>
<dbReference type="ChiTaRS" id="CEP85">
    <property type="organism name" value="human"/>
</dbReference>
<dbReference type="GenomeRNAi" id="64793"/>
<dbReference type="Pharos" id="Q6P2H3">
    <property type="development level" value="Tbio"/>
</dbReference>
<dbReference type="PRO" id="PR:Q6P2H3"/>
<dbReference type="Proteomes" id="UP000005640">
    <property type="component" value="Chromosome 1"/>
</dbReference>
<dbReference type="RNAct" id="Q6P2H3">
    <property type="molecule type" value="protein"/>
</dbReference>
<dbReference type="Bgee" id="ENSG00000130695">
    <property type="expression patterns" value="Expressed in oocyte and 185 other cell types or tissues"/>
</dbReference>
<dbReference type="ExpressionAtlas" id="Q6P2H3">
    <property type="expression patterns" value="baseline and differential"/>
</dbReference>
<dbReference type="GO" id="GO:0005938">
    <property type="term" value="C:cell cortex"/>
    <property type="evidence" value="ECO:0000314"/>
    <property type="project" value="UniProtKB"/>
</dbReference>
<dbReference type="GO" id="GO:0005814">
    <property type="term" value="C:centriole"/>
    <property type="evidence" value="ECO:0000314"/>
    <property type="project" value="UniProtKB"/>
</dbReference>
<dbReference type="GO" id="GO:0005813">
    <property type="term" value="C:centrosome"/>
    <property type="evidence" value="ECO:0000314"/>
    <property type="project" value="HPA"/>
</dbReference>
<dbReference type="GO" id="GO:0005829">
    <property type="term" value="C:cytosol"/>
    <property type="evidence" value="ECO:0000314"/>
    <property type="project" value="HPA"/>
</dbReference>
<dbReference type="GO" id="GO:0005794">
    <property type="term" value="C:Golgi apparatus"/>
    <property type="evidence" value="ECO:0000314"/>
    <property type="project" value="HPA"/>
</dbReference>
<dbReference type="GO" id="GO:0043231">
    <property type="term" value="C:intracellular membrane-bounded organelle"/>
    <property type="evidence" value="ECO:0000314"/>
    <property type="project" value="HPA"/>
</dbReference>
<dbReference type="GO" id="GO:0005730">
    <property type="term" value="C:nucleolus"/>
    <property type="evidence" value="ECO:0000314"/>
    <property type="project" value="HPA"/>
</dbReference>
<dbReference type="GO" id="GO:0000242">
    <property type="term" value="C:pericentriolar material"/>
    <property type="evidence" value="ECO:0000314"/>
    <property type="project" value="UniProtKB"/>
</dbReference>
<dbReference type="GO" id="GO:0000922">
    <property type="term" value="C:spindle pole"/>
    <property type="evidence" value="ECO:0000314"/>
    <property type="project" value="UniProtKB"/>
</dbReference>
<dbReference type="GO" id="GO:0042802">
    <property type="term" value="F:identical protein binding"/>
    <property type="evidence" value="ECO:0000314"/>
    <property type="project" value="UniProtKB"/>
</dbReference>
<dbReference type="GO" id="GO:0016477">
    <property type="term" value="P:cell migration"/>
    <property type="evidence" value="ECO:0000315"/>
    <property type="project" value="UniProtKB"/>
</dbReference>
<dbReference type="GO" id="GO:0098534">
    <property type="term" value="P:centriole assembly"/>
    <property type="evidence" value="ECO:0000315"/>
    <property type="project" value="UniProtKB"/>
</dbReference>
<dbReference type="GO" id="GO:0007099">
    <property type="term" value="P:centriole replication"/>
    <property type="evidence" value="ECO:0000315"/>
    <property type="project" value="UniProtKB"/>
</dbReference>
<dbReference type="GO" id="GO:0007059">
    <property type="term" value="P:chromosome segregation"/>
    <property type="evidence" value="ECO:0007669"/>
    <property type="project" value="UniProtKB-KW"/>
</dbReference>
<dbReference type="GO" id="GO:0006469">
    <property type="term" value="P:negative regulation of protein kinase activity"/>
    <property type="evidence" value="ECO:0000315"/>
    <property type="project" value="UniProtKB"/>
</dbReference>
<dbReference type="GO" id="GO:0046602">
    <property type="term" value="P:regulation of mitotic centrosome separation"/>
    <property type="evidence" value="ECO:0000315"/>
    <property type="project" value="UniProtKB"/>
</dbReference>
<dbReference type="InterPro" id="IPR040210">
    <property type="entry name" value="Cep85/Cep85L"/>
</dbReference>
<dbReference type="PANTHER" id="PTHR31075">
    <property type="entry name" value="CENTROSOMAL PROTEIN OF 85 KDA"/>
    <property type="match status" value="1"/>
</dbReference>
<dbReference type="PANTHER" id="PTHR31075:SF3">
    <property type="entry name" value="CENTROSOMAL PROTEIN OF 85 KDA"/>
    <property type="match status" value="1"/>
</dbReference>
<dbReference type="Pfam" id="PF24555">
    <property type="entry name" value="CC4_CEP85"/>
    <property type="match status" value="1"/>
</dbReference>
<evidence type="ECO:0000255" key="1"/>
<evidence type="ECO:0000256" key="2">
    <source>
        <dbReference type="SAM" id="MobiDB-lite"/>
    </source>
</evidence>
<evidence type="ECO:0000269" key="3">
    <source>
    </source>
</evidence>
<evidence type="ECO:0000269" key="4">
    <source>
    </source>
</evidence>
<evidence type="ECO:0000269" key="5">
    <source>
    </source>
</evidence>
<evidence type="ECO:0000269" key="6">
    <source>
    </source>
</evidence>
<evidence type="ECO:0000303" key="7">
    <source>
    </source>
</evidence>
<evidence type="ECO:0000303" key="8">
    <source>
    </source>
</evidence>
<evidence type="ECO:0000303" key="9">
    <source>
    </source>
</evidence>
<evidence type="ECO:0000305" key="10"/>
<evidence type="ECO:0000312" key="11">
    <source>
        <dbReference type="HGNC" id="HGNC:25309"/>
    </source>
</evidence>
<evidence type="ECO:0007744" key="12">
    <source>
        <dbReference type="PDB" id="5OI7"/>
    </source>
</evidence>
<evidence type="ECO:0007744" key="13">
    <source>
        <dbReference type="PDB" id="5OID"/>
    </source>
</evidence>
<evidence type="ECO:0007744" key="14">
    <source>
    </source>
</evidence>
<evidence type="ECO:0007744" key="15">
    <source>
    </source>
</evidence>
<evidence type="ECO:0007744" key="16">
    <source>
    </source>
</evidence>
<evidence type="ECO:0007829" key="17">
    <source>
        <dbReference type="PDB" id="5OI7"/>
    </source>
</evidence>
<reference key="1">
    <citation type="journal article" date="2004" name="Nat. Genet.">
        <title>Complete sequencing and characterization of 21,243 full-length human cDNAs.</title>
        <authorList>
            <person name="Ota T."/>
            <person name="Suzuki Y."/>
            <person name="Nishikawa T."/>
            <person name="Otsuki T."/>
            <person name="Sugiyama T."/>
            <person name="Irie R."/>
            <person name="Wakamatsu A."/>
            <person name="Hayashi K."/>
            <person name="Sato H."/>
            <person name="Nagai K."/>
            <person name="Kimura K."/>
            <person name="Makita H."/>
            <person name="Sekine M."/>
            <person name="Obayashi M."/>
            <person name="Nishi T."/>
            <person name="Shibahara T."/>
            <person name="Tanaka T."/>
            <person name="Ishii S."/>
            <person name="Yamamoto J."/>
            <person name="Saito K."/>
            <person name="Kawai Y."/>
            <person name="Isono Y."/>
            <person name="Nakamura Y."/>
            <person name="Nagahari K."/>
            <person name="Murakami K."/>
            <person name="Yasuda T."/>
            <person name="Iwayanagi T."/>
            <person name="Wagatsuma M."/>
            <person name="Shiratori A."/>
            <person name="Sudo H."/>
            <person name="Hosoiri T."/>
            <person name="Kaku Y."/>
            <person name="Kodaira H."/>
            <person name="Kondo H."/>
            <person name="Sugawara M."/>
            <person name="Takahashi M."/>
            <person name="Kanda K."/>
            <person name="Yokoi T."/>
            <person name="Furuya T."/>
            <person name="Kikkawa E."/>
            <person name="Omura Y."/>
            <person name="Abe K."/>
            <person name="Kamihara K."/>
            <person name="Katsuta N."/>
            <person name="Sato K."/>
            <person name="Tanikawa M."/>
            <person name="Yamazaki M."/>
            <person name="Ninomiya K."/>
            <person name="Ishibashi T."/>
            <person name="Yamashita H."/>
            <person name="Murakawa K."/>
            <person name="Fujimori K."/>
            <person name="Tanai H."/>
            <person name="Kimata M."/>
            <person name="Watanabe M."/>
            <person name="Hiraoka S."/>
            <person name="Chiba Y."/>
            <person name="Ishida S."/>
            <person name="Ono Y."/>
            <person name="Takiguchi S."/>
            <person name="Watanabe S."/>
            <person name="Yosida M."/>
            <person name="Hotuta T."/>
            <person name="Kusano J."/>
            <person name="Kanehori K."/>
            <person name="Takahashi-Fujii A."/>
            <person name="Hara H."/>
            <person name="Tanase T.-O."/>
            <person name="Nomura Y."/>
            <person name="Togiya S."/>
            <person name="Komai F."/>
            <person name="Hara R."/>
            <person name="Takeuchi K."/>
            <person name="Arita M."/>
            <person name="Imose N."/>
            <person name="Musashino K."/>
            <person name="Yuuki H."/>
            <person name="Oshima A."/>
            <person name="Sasaki N."/>
            <person name="Aotsuka S."/>
            <person name="Yoshikawa Y."/>
            <person name="Matsunawa H."/>
            <person name="Ichihara T."/>
            <person name="Shiohata N."/>
            <person name="Sano S."/>
            <person name="Moriya S."/>
            <person name="Momiyama H."/>
            <person name="Satoh N."/>
            <person name="Takami S."/>
            <person name="Terashima Y."/>
            <person name="Suzuki O."/>
            <person name="Nakagawa S."/>
            <person name="Senoh A."/>
            <person name="Mizoguchi H."/>
            <person name="Goto Y."/>
            <person name="Shimizu F."/>
            <person name="Wakebe H."/>
            <person name="Hishigaki H."/>
            <person name="Watanabe T."/>
            <person name="Sugiyama A."/>
            <person name="Takemoto M."/>
            <person name="Kawakami B."/>
            <person name="Yamazaki M."/>
            <person name="Watanabe K."/>
            <person name="Kumagai A."/>
            <person name="Itakura S."/>
            <person name="Fukuzumi Y."/>
            <person name="Fujimori Y."/>
            <person name="Komiyama M."/>
            <person name="Tashiro H."/>
            <person name="Tanigami A."/>
            <person name="Fujiwara T."/>
            <person name="Ono T."/>
            <person name="Yamada K."/>
            <person name="Fujii Y."/>
            <person name="Ozaki K."/>
            <person name="Hirao M."/>
            <person name="Ohmori Y."/>
            <person name="Kawabata A."/>
            <person name="Hikiji T."/>
            <person name="Kobatake N."/>
            <person name="Inagaki H."/>
            <person name="Ikema Y."/>
            <person name="Okamoto S."/>
            <person name="Okitani R."/>
            <person name="Kawakami T."/>
            <person name="Noguchi S."/>
            <person name="Itoh T."/>
            <person name="Shigeta K."/>
            <person name="Senba T."/>
            <person name="Matsumura K."/>
            <person name="Nakajima Y."/>
            <person name="Mizuno T."/>
            <person name="Morinaga M."/>
            <person name="Sasaki M."/>
            <person name="Togashi T."/>
            <person name="Oyama M."/>
            <person name="Hata H."/>
            <person name="Watanabe M."/>
            <person name="Komatsu T."/>
            <person name="Mizushima-Sugano J."/>
            <person name="Satoh T."/>
            <person name="Shirai Y."/>
            <person name="Takahashi Y."/>
            <person name="Nakagawa K."/>
            <person name="Okumura K."/>
            <person name="Nagase T."/>
            <person name="Nomura N."/>
            <person name="Kikuchi H."/>
            <person name="Masuho Y."/>
            <person name="Yamashita R."/>
            <person name="Nakai K."/>
            <person name="Yada T."/>
            <person name="Nakamura Y."/>
            <person name="Ohara O."/>
            <person name="Isogai T."/>
            <person name="Sugano S."/>
        </authorList>
    </citation>
    <scope>NUCLEOTIDE SEQUENCE [LARGE SCALE MRNA] (ISOFORMS 2 AND 4)</scope>
    <scope>NUCLEOTIDE SEQUENCE [LARGE SCALE MRNA] OF 408-762 (ISOFORM 1)</scope>
    <source>
        <tissue>Hepatoma</tissue>
        <tissue>Retinoblastoma</tissue>
        <tissue>Teratocarcinoma</tissue>
    </source>
</reference>
<reference key="2">
    <citation type="journal article" date="2006" name="Nature">
        <title>The DNA sequence and biological annotation of human chromosome 1.</title>
        <authorList>
            <person name="Gregory S.G."/>
            <person name="Barlow K.F."/>
            <person name="McLay K.E."/>
            <person name="Kaul R."/>
            <person name="Swarbreck D."/>
            <person name="Dunham A."/>
            <person name="Scott C.E."/>
            <person name="Howe K.L."/>
            <person name="Woodfine K."/>
            <person name="Spencer C.C.A."/>
            <person name="Jones M.C."/>
            <person name="Gillson C."/>
            <person name="Searle S."/>
            <person name="Zhou Y."/>
            <person name="Kokocinski F."/>
            <person name="McDonald L."/>
            <person name="Evans R."/>
            <person name="Phillips K."/>
            <person name="Atkinson A."/>
            <person name="Cooper R."/>
            <person name="Jones C."/>
            <person name="Hall R.E."/>
            <person name="Andrews T.D."/>
            <person name="Lloyd C."/>
            <person name="Ainscough R."/>
            <person name="Almeida J.P."/>
            <person name="Ambrose K.D."/>
            <person name="Anderson F."/>
            <person name="Andrew R.W."/>
            <person name="Ashwell R.I.S."/>
            <person name="Aubin K."/>
            <person name="Babbage A.K."/>
            <person name="Bagguley C.L."/>
            <person name="Bailey J."/>
            <person name="Beasley H."/>
            <person name="Bethel G."/>
            <person name="Bird C.P."/>
            <person name="Bray-Allen S."/>
            <person name="Brown J.Y."/>
            <person name="Brown A.J."/>
            <person name="Buckley D."/>
            <person name="Burton J."/>
            <person name="Bye J."/>
            <person name="Carder C."/>
            <person name="Chapman J.C."/>
            <person name="Clark S.Y."/>
            <person name="Clarke G."/>
            <person name="Clee C."/>
            <person name="Cobley V."/>
            <person name="Collier R.E."/>
            <person name="Corby N."/>
            <person name="Coville G.J."/>
            <person name="Davies J."/>
            <person name="Deadman R."/>
            <person name="Dunn M."/>
            <person name="Earthrowl M."/>
            <person name="Ellington A.G."/>
            <person name="Errington H."/>
            <person name="Frankish A."/>
            <person name="Frankland J."/>
            <person name="French L."/>
            <person name="Garner P."/>
            <person name="Garnett J."/>
            <person name="Gay L."/>
            <person name="Ghori M.R.J."/>
            <person name="Gibson R."/>
            <person name="Gilby L.M."/>
            <person name="Gillett W."/>
            <person name="Glithero R.J."/>
            <person name="Grafham D.V."/>
            <person name="Griffiths C."/>
            <person name="Griffiths-Jones S."/>
            <person name="Grocock R."/>
            <person name="Hammond S."/>
            <person name="Harrison E.S.I."/>
            <person name="Hart E."/>
            <person name="Haugen E."/>
            <person name="Heath P.D."/>
            <person name="Holmes S."/>
            <person name="Holt K."/>
            <person name="Howden P.J."/>
            <person name="Hunt A.R."/>
            <person name="Hunt S.E."/>
            <person name="Hunter G."/>
            <person name="Isherwood J."/>
            <person name="James R."/>
            <person name="Johnson C."/>
            <person name="Johnson D."/>
            <person name="Joy A."/>
            <person name="Kay M."/>
            <person name="Kershaw J.K."/>
            <person name="Kibukawa M."/>
            <person name="Kimberley A.M."/>
            <person name="King A."/>
            <person name="Knights A.J."/>
            <person name="Lad H."/>
            <person name="Laird G."/>
            <person name="Lawlor S."/>
            <person name="Leongamornlert D.A."/>
            <person name="Lloyd D.M."/>
            <person name="Loveland J."/>
            <person name="Lovell J."/>
            <person name="Lush M.J."/>
            <person name="Lyne R."/>
            <person name="Martin S."/>
            <person name="Mashreghi-Mohammadi M."/>
            <person name="Matthews L."/>
            <person name="Matthews N.S.W."/>
            <person name="McLaren S."/>
            <person name="Milne S."/>
            <person name="Mistry S."/>
            <person name="Moore M.J.F."/>
            <person name="Nickerson T."/>
            <person name="O'Dell C.N."/>
            <person name="Oliver K."/>
            <person name="Palmeiri A."/>
            <person name="Palmer S.A."/>
            <person name="Parker A."/>
            <person name="Patel D."/>
            <person name="Pearce A.V."/>
            <person name="Peck A.I."/>
            <person name="Pelan S."/>
            <person name="Phelps K."/>
            <person name="Phillimore B.J."/>
            <person name="Plumb R."/>
            <person name="Rajan J."/>
            <person name="Raymond C."/>
            <person name="Rouse G."/>
            <person name="Saenphimmachak C."/>
            <person name="Sehra H.K."/>
            <person name="Sheridan E."/>
            <person name="Shownkeen R."/>
            <person name="Sims S."/>
            <person name="Skuce C.D."/>
            <person name="Smith M."/>
            <person name="Steward C."/>
            <person name="Subramanian S."/>
            <person name="Sycamore N."/>
            <person name="Tracey A."/>
            <person name="Tromans A."/>
            <person name="Van Helmond Z."/>
            <person name="Wall M."/>
            <person name="Wallis J.M."/>
            <person name="White S."/>
            <person name="Whitehead S.L."/>
            <person name="Wilkinson J.E."/>
            <person name="Willey D.L."/>
            <person name="Williams H."/>
            <person name="Wilming L."/>
            <person name="Wray P.W."/>
            <person name="Wu Z."/>
            <person name="Coulson A."/>
            <person name="Vaudin M."/>
            <person name="Sulston J.E."/>
            <person name="Durbin R.M."/>
            <person name="Hubbard T."/>
            <person name="Wooster R."/>
            <person name="Dunham I."/>
            <person name="Carter N.P."/>
            <person name="McVean G."/>
            <person name="Ross M.T."/>
            <person name="Harrow J."/>
            <person name="Olson M.V."/>
            <person name="Beck S."/>
            <person name="Rogers J."/>
            <person name="Bentley D.R."/>
        </authorList>
    </citation>
    <scope>NUCLEOTIDE SEQUENCE [LARGE SCALE GENOMIC DNA]</scope>
</reference>
<reference key="3">
    <citation type="submission" date="2005-09" db="EMBL/GenBank/DDBJ databases">
        <authorList>
            <person name="Mural R.J."/>
            <person name="Istrail S."/>
            <person name="Sutton G.G."/>
            <person name="Florea L."/>
            <person name="Halpern A.L."/>
            <person name="Mobarry C.M."/>
            <person name="Lippert R."/>
            <person name="Walenz B."/>
            <person name="Shatkay H."/>
            <person name="Dew I."/>
            <person name="Miller J.R."/>
            <person name="Flanigan M.J."/>
            <person name="Edwards N.J."/>
            <person name="Bolanos R."/>
            <person name="Fasulo D."/>
            <person name="Halldorsson B.V."/>
            <person name="Hannenhalli S."/>
            <person name="Turner R."/>
            <person name="Yooseph S."/>
            <person name="Lu F."/>
            <person name="Nusskern D.R."/>
            <person name="Shue B.C."/>
            <person name="Zheng X.H."/>
            <person name="Zhong F."/>
            <person name="Delcher A.L."/>
            <person name="Huson D.H."/>
            <person name="Kravitz S.A."/>
            <person name="Mouchard L."/>
            <person name="Reinert K."/>
            <person name="Remington K.A."/>
            <person name="Clark A.G."/>
            <person name="Waterman M.S."/>
            <person name="Eichler E.E."/>
            <person name="Adams M.D."/>
            <person name="Hunkapiller M.W."/>
            <person name="Myers E.W."/>
            <person name="Venter J.C."/>
        </authorList>
    </citation>
    <scope>NUCLEOTIDE SEQUENCE [LARGE SCALE GENOMIC DNA]</scope>
</reference>
<reference key="4">
    <citation type="journal article" date="2004" name="Genome Res.">
        <title>The status, quality, and expansion of the NIH full-length cDNA project: the Mammalian Gene Collection (MGC).</title>
        <authorList>
            <consortium name="The MGC Project Team"/>
        </authorList>
    </citation>
    <scope>NUCLEOTIDE SEQUENCE [LARGE SCALE MRNA] (ISOFORMS 1 AND 3)</scope>
    <source>
        <tissue>Placenta</tissue>
        <tissue>Testis</tissue>
    </source>
</reference>
<reference key="5">
    <citation type="journal article" date="2007" name="BMC Genomics">
        <title>The full-ORF clone resource of the German cDNA consortium.</title>
        <authorList>
            <person name="Bechtel S."/>
            <person name="Rosenfelder H."/>
            <person name="Duda A."/>
            <person name="Schmidt C.P."/>
            <person name="Ernst U."/>
            <person name="Wellenreuther R."/>
            <person name="Mehrle A."/>
            <person name="Schuster C."/>
            <person name="Bahr A."/>
            <person name="Bloecker H."/>
            <person name="Heubner D."/>
            <person name="Hoerlein A."/>
            <person name="Michel G."/>
            <person name="Wedler H."/>
            <person name="Koehrer K."/>
            <person name="Ottenwaelder B."/>
            <person name="Poustka A."/>
            <person name="Wiemann S."/>
            <person name="Schupp I."/>
        </authorList>
    </citation>
    <scope>NUCLEOTIDE SEQUENCE [LARGE SCALE MRNA] OF 328-762 (ISOFORM 2)</scope>
    <source>
        <tissue>Testis</tissue>
    </source>
</reference>
<reference key="6">
    <citation type="journal article" date="2008" name="Proc. Natl. Acad. Sci. U.S.A.">
        <title>A quantitative atlas of mitotic phosphorylation.</title>
        <authorList>
            <person name="Dephoure N."/>
            <person name="Zhou C."/>
            <person name="Villen J."/>
            <person name="Beausoleil S.A."/>
            <person name="Bakalarski C.E."/>
            <person name="Elledge S.J."/>
            <person name="Gygi S.P."/>
        </authorList>
    </citation>
    <scope>PHOSPHORYLATION [LARGE SCALE ANALYSIS] AT SER-17</scope>
    <scope>IDENTIFICATION BY MASS SPECTROMETRY [LARGE SCALE ANALYSIS]</scope>
    <source>
        <tissue>Cervix carcinoma</tissue>
    </source>
</reference>
<reference key="7">
    <citation type="journal article" date="2010" name="Sci. Signal.">
        <title>Quantitative phosphoproteomics reveals widespread full phosphorylation site occupancy during mitosis.</title>
        <authorList>
            <person name="Olsen J.V."/>
            <person name="Vermeulen M."/>
            <person name="Santamaria A."/>
            <person name="Kumar C."/>
            <person name="Miller M.L."/>
            <person name="Jensen L.J."/>
            <person name="Gnad F."/>
            <person name="Cox J."/>
            <person name="Jensen T.S."/>
            <person name="Nigg E.A."/>
            <person name="Brunak S."/>
            <person name="Mann M."/>
        </authorList>
    </citation>
    <scope>PHOSPHORYLATION [LARGE SCALE ANALYSIS] AT SER-623</scope>
    <scope>IDENTIFICATION BY MASS SPECTROMETRY [LARGE SCALE ANALYSIS]</scope>
    <source>
        <tissue>Cervix carcinoma</tissue>
    </source>
</reference>
<reference key="8">
    <citation type="journal article" date="2011" name="EMBO J.">
        <title>Novel asymmetrically localizing components of human centrosomes identified by complementary proteomics methods.</title>
        <authorList>
            <person name="Jakobsen L."/>
            <person name="Vanselow K."/>
            <person name="Skogs M."/>
            <person name="Toyoda Y."/>
            <person name="Lundberg E."/>
            <person name="Poser I."/>
            <person name="Falkenby L.G."/>
            <person name="Bennetzen M."/>
            <person name="Westendorf J."/>
            <person name="Nigg E.A."/>
            <person name="Uhlen M."/>
            <person name="Hyman A.A."/>
            <person name="Andersen J.S."/>
        </authorList>
    </citation>
    <scope>IDENTIFICATION BY MASS SPECTROMETRY</scope>
    <scope>SUBCELLULAR LOCATION</scope>
</reference>
<reference key="9">
    <citation type="journal article" date="2013" name="J. Proteome Res.">
        <title>Toward a comprehensive characterization of a human cancer cell phosphoproteome.</title>
        <authorList>
            <person name="Zhou H."/>
            <person name="Di Palma S."/>
            <person name="Preisinger C."/>
            <person name="Peng M."/>
            <person name="Polat A.N."/>
            <person name="Heck A.J."/>
            <person name="Mohammed S."/>
        </authorList>
    </citation>
    <scope>PHOSPHORYLATION [LARGE SCALE ANALYSIS] AT SER-126 AND SER-141</scope>
    <scope>IDENTIFICATION BY MASS SPECTROMETRY [LARGE SCALE ANALYSIS]</scope>
    <source>
        <tissue>Cervix carcinoma</tissue>
        <tissue>Erythroleukemia</tissue>
    </source>
</reference>
<reference key="10">
    <citation type="journal article" date="2015" name="J. Cell Sci.">
        <title>Characterization of Cep85 - a new antagonist of Nek2A that is involved in the regulation of centrosome disjunction.</title>
        <authorList>
            <person name="Chen C."/>
            <person name="Tian F."/>
            <person name="Lu L."/>
            <person name="Wang Y."/>
            <person name="Xiao Z."/>
            <person name="Yu C."/>
            <person name="Yu X."/>
        </authorList>
    </citation>
    <scope>FUNCTION</scope>
    <scope>SUBCELLULAR LOCATION</scope>
    <scope>INTERACTION WITH NEK2</scope>
    <scope>IDENTIFICATION BY MASS SPECTROMETRY</scope>
</reference>
<reference key="11">
    <citation type="journal article" date="2015" name="J. Cell Sci.">
        <authorList>
            <person name="Chen C."/>
            <person name="Tian F."/>
            <person name="Lu L."/>
            <person name="Wang Y."/>
            <person name="Xiao Z."/>
            <person name="Yu C."/>
            <person name="Yu X."/>
        </authorList>
    </citation>
    <scope>ERRATUM OF PUBMED:26220856</scope>
</reference>
<reference key="12">
    <citation type="journal article" date="2020" name="J. Cell Sci.">
        <title>Direct interaction between CEP85 and STIL mediates PLK4-driven directed cell migration.</title>
        <authorList>
            <person name="Liu Y."/>
            <person name="Kim J."/>
            <person name="Philip R."/>
            <person name="Sridhar V."/>
            <person name="Chandrashekhar M."/>
            <person name="Moffat J."/>
            <person name="van Breugel M."/>
            <person name="Pelletier L."/>
        </authorList>
    </citation>
    <scope>FUNCTION</scope>
    <scope>INTERACTION WITH PLK4</scope>
    <scope>MUTAGENESIS OF GLN-640 AND GLU-644</scope>
    <scope>SUBCELLULAR LOCATION</scope>
</reference>
<reference evidence="12 13" key="13">
    <citation type="journal article" date="2018" name="Nat. Commun.">
        <title>Direct binding of CEP85 to STIL ensures robust PLK4 activation and efficient centriole assembly.</title>
        <authorList>
            <person name="Liu Y."/>
            <person name="Gupta G.D."/>
            <person name="Barnabas D.D."/>
            <person name="Agircan F.G."/>
            <person name="Mehmood S."/>
            <person name="Wu D."/>
            <person name="Coyaud E."/>
            <person name="Johnson C.M."/>
            <person name="McLaughlin S.H."/>
            <person name="Andreeva A."/>
            <person name="Freund S.M.V."/>
            <person name="Robinson C.V."/>
            <person name="Cheung S.W.T."/>
            <person name="Raught B."/>
            <person name="Pelletier L."/>
            <person name="van Breugel M."/>
        </authorList>
    </citation>
    <scope>X-RAY CRYSTALLOGRAPHY (1.67 ANGSTROMS) OF 570-656</scope>
    <scope>X-RAY CRYSTALLOGRAPHY (4.60 ANGSTROMS) OF 570-656 IN COMPLEX WITH TRICHOPLAX ADHAERENS STIL</scope>
    <scope>SUBUNIT</scope>
    <scope>SUBCELLULAR LOCATION</scope>
    <scope>FUNCTION</scope>
    <scope>MUTAGENESIS OF GLN-640 AND GLU-644</scope>
</reference>
<accession>Q6P2H3</accession>
<accession>B4DRL1</accession>
<accession>D3DPK4</accession>
<accession>F8W7K4</accession>
<accession>Q5VY68</accession>
<accession>Q5VY70</accession>
<accession>Q9H6Q1</accession>
<accession>Q9H828</accession>
<accession>Q9UF52</accession>
<organism>
    <name type="scientific">Homo sapiens</name>
    <name type="common">Human</name>
    <dbReference type="NCBI Taxonomy" id="9606"/>
    <lineage>
        <taxon>Eukaryota</taxon>
        <taxon>Metazoa</taxon>
        <taxon>Chordata</taxon>
        <taxon>Craniata</taxon>
        <taxon>Vertebrata</taxon>
        <taxon>Euteleostomi</taxon>
        <taxon>Mammalia</taxon>
        <taxon>Eutheria</taxon>
        <taxon>Euarchontoglires</taxon>
        <taxon>Primates</taxon>
        <taxon>Haplorrhini</taxon>
        <taxon>Catarrhini</taxon>
        <taxon>Hominidae</taxon>
        <taxon>Homo</taxon>
    </lineage>
</organism>
<name>CEP85_HUMAN</name>
<gene>
    <name evidence="11" type="primary">CEP85</name>
    <name type="synonym">CCDC21</name>
</gene>
<keyword id="KW-0002">3D-structure</keyword>
<keyword id="KW-0025">Alternative splicing</keyword>
<keyword id="KW-0159">Chromosome partition</keyword>
<keyword id="KW-0175">Coiled coil</keyword>
<keyword id="KW-0963">Cytoplasm</keyword>
<keyword id="KW-0206">Cytoskeleton</keyword>
<keyword id="KW-0539">Nucleus</keyword>
<keyword id="KW-0597">Phosphoprotein</keyword>
<keyword id="KW-1267">Proteomics identification</keyword>
<keyword id="KW-1185">Reference proteome</keyword>